<evidence type="ECO:0000255" key="1">
    <source>
        <dbReference type="PROSITE-ProRule" id="PRU00520"/>
    </source>
</evidence>
<evidence type="ECO:0000305" key="2"/>
<organism>
    <name type="scientific">Alcanivorax borkumensis (strain ATCC 700651 / DSM 11573 / NCIMB 13689 / SK2)</name>
    <dbReference type="NCBI Taxonomy" id="393595"/>
    <lineage>
        <taxon>Bacteria</taxon>
        <taxon>Pseudomonadati</taxon>
        <taxon>Pseudomonadota</taxon>
        <taxon>Gammaproteobacteria</taxon>
        <taxon>Oceanospirillales</taxon>
        <taxon>Alcanivoracaceae</taxon>
        <taxon>Alcanivorax</taxon>
    </lineage>
</organism>
<reference key="1">
    <citation type="journal article" date="2006" name="Nat. Biotechnol.">
        <title>Genome sequence of the ubiquitous hydrocarbon-degrading marine bacterium Alcanivorax borkumensis.</title>
        <authorList>
            <person name="Schneiker S."/>
            <person name="Martins dos Santos V.A.P."/>
            <person name="Bartels D."/>
            <person name="Bekel T."/>
            <person name="Brecht M."/>
            <person name="Buhrmester J."/>
            <person name="Chernikova T.N."/>
            <person name="Denaro R."/>
            <person name="Ferrer M."/>
            <person name="Gertler C."/>
            <person name="Goesmann A."/>
            <person name="Golyshina O.V."/>
            <person name="Kaminski F."/>
            <person name="Khachane A.N."/>
            <person name="Lang S."/>
            <person name="Linke B."/>
            <person name="McHardy A.C."/>
            <person name="Meyer F."/>
            <person name="Nechitaylo T."/>
            <person name="Puehler A."/>
            <person name="Regenhardt D."/>
            <person name="Rupp O."/>
            <person name="Sabirova J.S."/>
            <person name="Selbitschka W."/>
            <person name="Yakimov M.M."/>
            <person name="Timmis K.N."/>
            <person name="Vorhoelter F.-J."/>
            <person name="Weidner S."/>
            <person name="Kaiser O."/>
            <person name="Golyshin P.N."/>
        </authorList>
    </citation>
    <scope>NUCLEOTIDE SEQUENCE [LARGE SCALE GENOMIC DNA]</scope>
    <source>
        <strain>ATCC 700651 / DSM 11573 / NCIMB 13689 / SK2</strain>
    </source>
</reference>
<feature type="chain" id="PRO_0000326646" description="Acylphosphatase">
    <location>
        <begin position="1"/>
        <end position="92"/>
    </location>
</feature>
<feature type="domain" description="Acylphosphatase-like" evidence="1">
    <location>
        <begin position="3"/>
        <end position="92"/>
    </location>
</feature>
<feature type="active site" evidence="1">
    <location>
        <position position="18"/>
    </location>
</feature>
<feature type="active site" evidence="1">
    <location>
        <position position="36"/>
    </location>
</feature>
<gene>
    <name type="primary">acyP</name>
    <name type="ordered locus">ABO_1542</name>
</gene>
<protein>
    <recommendedName>
        <fullName>Acylphosphatase</fullName>
        <ecNumber>3.6.1.7</ecNumber>
    </recommendedName>
    <alternativeName>
        <fullName>Acylphosphate phosphohydrolase</fullName>
    </alternativeName>
</protein>
<dbReference type="EC" id="3.6.1.7"/>
<dbReference type="EMBL" id="AM286690">
    <property type="protein sequence ID" value="CAL16990.1"/>
    <property type="molecule type" value="Genomic_DNA"/>
</dbReference>
<dbReference type="RefSeq" id="WP_011588823.1">
    <property type="nucleotide sequence ID" value="NC_008260.1"/>
</dbReference>
<dbReference type="SMR" id="Q0VPA8"/>
<dbReference type="STRING" id="393595.ABO_1542"/>
<dbReference type="KEGG" id="abo:ABO_1542"/>
<dbReference type="eggNOG" id="COG1254">
    <property type="taxonomic scope" value="Bacteria"/>
</dbReference>
<dbReference type="HOGENOM" id="CLU_141932_1_3_6"/>
<dbReference type="OrthoDB" id="5295388at2"/>
<dbReference type="Proteomes" id="UP000008871">
    <property type="component" value="Chromosome"/>
</dbReference>
<dbReference type="GO" id="GO:0003998">
    <property type="term" value="F:acylphosphatase activity"/>
    <property type="evidence" value="ECO:0007669"/>
    <property type="project" value="UniProtKB-EC"/>
</dbReference>
<dbReference type="Gene3D" id="3.30.70.100">
    <property type="match status" value="1"/>
</dbReference>
<dbReference type="InterPro" id="IPR020456">
    <property type="entry name" value="Acylphosphatase"/>
</dbReference>
<dbReference type="InterPro" id="IPR001792">
    <property type="entry name" value="Acylphosphatase-like_dom"/>
</dbReference>
<dbReference type="InterPro" id="IPR036046">
    <property type="entry name" value="Acylphosphatase-like_dom_sf"/>
</dbReference>
<dbReference type="InterPro" id="IPR017968">
    <property type="entry name" value="Acylphosphatase_CS"/>
</dbReference>
<dbReference type="PANTHER" id="PTHR47268">
    <property type="entry name" value="ACYLPHOSPHATASE"/>
    <property type="match status" value="1"/>
</dbReference>
<dbReference type="PANTHER" id="PTHR47268:SF4">
    <property type="entry name" value="ACYLPHOSPHATASE"/>
    <property type="match status" value="1"/>
</dbReference>
<dbReference type="Pfam" id="PF00708">
    <property type="entry name" value="Acylphosphatase"/>
    <property type="match status" value="1"/>
</dbReference>
<dbReference type="SUPFAM" id="SSF54975">
    <property type="entry name" value="Acylphosphatase/BLUF domain-like"/>
    <property type="match status" value="1"/>
</dbReference>
<dbReference type="PROSITE" id="PS00151">
    <property type="entry name" value="ACYLPHOSPHATASE_2"/>
    <property type="match status" value="1"/>
</dbReference>
<dbReference type="PROSITE" id="PS51160">
    <property type="entry name" value="ACYLPHOSPHATASE_3"/>
    <property type="match status" value="1"/>
</dbReference>
<keyword id="KW-0378">Hydrolase</keyword>
<keyword id="KW-1185">Reference proteome</keyword>
<proteinExistence type="inferred from homology"/>
<accession>Q0VPA8</accession>
<name>ACYP_ALCBS</name>
<sequence length="92" mass="10103">MTTKHVLVSGIVQGVGYRAWARQEATRRNLTGWVRNCADGRVEALLEGEADAVDDMLNAMHQGPALAQVDRILVEEGNNDDDGPRSTHFEVT</sequence>
<comment type="catalytic activity">
    <reaction>
        <text>an acyl phosphate + H2O = a carboxylate + phosphate + H(+)</text>
        <dbReference type="Rhea" id="RHEA:14965"/>
        <dbReference type="ChEBI" id="CHEBI:15377"/>
        <dbReference type="ChEBI" id="CHEBI:15378"/>
        <dbReference type="ChEBI" id="CHEBI:29067"/>
        <dbReference type="ChEBI" id="CHEBI:43474"/>
        <dbReference type="ChEBI" id="CHEBI:59918"/>
        <dbReference type="EC" id="3.6.1.7"/>
    </reaction>
</comment>
<comment type="similarity">
    <text evidence="2">Belongs to the acylphosphatase family.</text>
</comment>